<proteinExistence type="evidence at protein level"/>
<protein>
    <recommendedName>
        <fullName>Osteocalcin</fullName>
    </recommendedName>
    <alternativeName>
        <fullName>Bone Gla protein</fullName>
        <shortName>BGP</shortName>
    </alternativeName>
    <alternativeName>
        <fullName>Gamma-carboxyglutamic acid-containing protein</fullName>
    </alternativeName>
</protein>
<comment type="function">
    <text evidence="2 4">The carboxylated form is one of the main organic components of the bone matrix, which constitutes 1-2% of the total bone protein (PubMed:6332627). It acts as a negative regulator of bone formation and is required to limit bone formation without impairing bone resorption or mineralization. The carboxylated form binds strongly to apatite and calcium (By similarity).</text>
</comment>
<comment type="function">
    <text evidence="2">The uncarboxylated form acts as a hormone secreted by osteoblasts, which regulates different cellular processes, such as energy metabolism, male fertility and brain development. Regulates of energy metabolism by acting as a hormone favoring pancreatic beta-cell proliferation, insulin secretion and sensitivity and energy expenditure. Uncarboxylated osteocalcin hormone also promotes testosterone production in the testes: acts as a ligand for G protein-coupled receptor GPRC6A at the surface of Leydig cells, initiating a signaling response that promotes the expression of enzymes required for testosterone synthesis in a CREB-dependent manner. Also acts as a regulator of brain development: osteocalcin hormone crosses the blood-brain barrier and acts as a ligand for GPR158 on neurons, initiating a signaling response that prevents neuronal apoptosis in the hippocampus, favors the synthesis of all monoamine neurotransmitters and inhibits that of gamma-aminobutyric acid (GABA). Osteocalcin also crosses the placenta during pregnancy and maternal osteocalcin is required for fetal brain development.</text>
</comment>
<comment type="subcellular location">
    <subcellularLocation>
        <location evidence="4">Secreted</location>
    </subcellularLocation>
</comment>
<comment type="PTM">
    <text evidence="2 3 4">Gamma-carboxyglutamate residues are formed by vitamin K dependent carboxylation by GGCX. These residues are essential for the binding of calcium (By similarity) (PubMed:6332627). Decarboxylation promotes the hormone activity (By similarity).</text>
</comment>
<comment type="similarity">
    <text evidence="5">Belongs to the osteocalcin/matrix Gla protein family.</text>
</comment>
<name>OSTCN_CAPHI</name>
<dbReference type="SMR" id="P0C225"/>
<dbReference type="STRING" id="9925.ENSCHIP00000031297"/>
<dbReference type="Proteomes" id="UP000291000">
    <property type="component" value="Unassembled WGS sequence"/>
</dbReference>
<dbReference type="Proteomes" id="UP000694566">
    <property type="component" value="Unplaced"/>
</dbReference>
<dbReference type="GO" id="GO:0005737">
    <property type="term" value="C:cytoplasm"/>
    <property type="evidence" value="ECO:0000250"/>
    <property type="project" value="UniProtKB"/>
</dbReference>
<dbReference type="GO" id="GO:0005576">
    <property type="term" value="C:extracellular region"/>
    <property type="evidence" value="ECO:0007669"/>
    <property type="project" value="UniProtKB-SubCell"/>
</dbReference>
<dbReference type="GO" id="GO:0005509">
    <property type="term" value="F:calcium ion binding"/>
    <property type="evidence" value="ECO:0007669"/>
    <property type="project" value="InterPro"/>
</dbReference>
<dbReference type="GO" id="GO:0005179">
    <property type="term" value="F:hormone activity"/>
    <property type="evidence" value="ECO:0000250"/>
    <property type="project" value="UniProtKB"/>
</dbReference>
<dbReference type="GO" id="GO:0046848">
    <property type="term" value="F:hydroxyapatite binding"/>
    <property type="evidence" value="ECO:0007669"/>
    <property type="project" value="TreeGrafter"/>
</dbReference>
<dbReference type="GO" id="GO:0008147">
    <property type="term" value="F:structural constituent of bone"/>
    <property type="evidence" value="ECO:0000250"/>
    <property type="project" value="UniProtKB"/>
</dbReference>
<dbReference type="GO" id="GO:0031214">
    <property type="term" value="P:biomineral tissue development"/>
    <property type="evidence" value="ECO:0007669"/>
    <property type="project" value="UniProtKB-KW"/>
</dbReference>
<dbReference type="GO" id="GO:0060348">
    <property type="term" value="P:bone development"/>
    <property type="evidence" value="ECO:0007669"/>
    <property type="project" value="InterPro"/>
</dbReference>
<dbReference type="GO" id="GO:0007420">
    <property type="term" value="P:brain development"/>
    <property type="evidence" value="ECO:0000250"/>
    <property type="project" value="UniProtKB"/>
</dbReference>
<dbReference type="GO" id="GO:0032869">
    <property type="term" value="P:cellular response to insulin stimulus"/>
    <property type="evidence" value="ECO:0000250"/>
    <property type="project" value="UniProtKB"/>
</dbReference>
<dbReference type="GO" id="GO:0050890">
    <property type="term" value="P:cognition"/>
    <property type="evidence" value="ECO:0000250"/>
    <property type="project" value="UniProtKB"/>
</dbReference>
<dbReference type="GO" id="GO:0042593">
    <property type="term" value="P:glucose homeostasis"/>
    <property type="evidence" value="ECO:0000250"/>
    <property type="project" value="UniProtKB"/>
</dbReference>
<dbReference type="GO" id="GO:0007611">
    <property type="term" value="P:learning or memory"/>
    <property type="evidence" value="ECO:0000250"/>
    <property type="project" value="UniProtKB"/>
</dbReference>
<dbReference type="GO" id="GO:1903011">
    <property type="term" value="P:negative regulation of bone development"/>
    <property type="evidence" value="ECO:0000250"/>
    <property type="project" value="UniProtKB"/>
</dbReference>
<dbReference type="GO" id="GO:0001649">
    <property type="term" value="P:osteoblast differentiation"/>
    <property type="evidence" value="ECO:0007669"/>
    <property type="project" value="TreeGrafter"/>
</dbReference>
<dbReference type="GO" id="GO:0001956">
    <property type="term" value="P:positive regulation of neurotransmitter secretion"/>
    <property type="evidence" value="ECO:0000250"/>
    <property type="project" value="UniProtKB"/>
</dbReference>
<dbReference type="GO" id="GO:0030500">
    <property type="term" value="P:regulation of bone mineralization"/>
    <property type="evidence" value="ECO:0007669"/>
    <property type="project" value="InterPro"/>
</dbReference>
<dbReference type="GO" id="GO:1900076">
    <property type="term" value="P:regulation of cellular response to insulin stimulus"/>
    <property type="evidence" value="ECO:0007669"/>
    <property type="project" value="InterPro"/>
</dbReference>
<dbReference type="GO" id="GO:2000224">
    <property type="term" value="P:regulation of testosterone biosynthetic process"/>
    <property type="evidence" value="ECO:0000250"/>
    <property type="project" value="UniProtKB"/>
</dbReference>
<dbReference type="GO" id="GO:0032571">
    <property type="term" value="P:response to vitamin K"/>
    <property type="evidence" value="ECO:0007669"/>
    <property type="project" value="InterPro"/>
</dbReference>
<dbReference type="GO" id="GO:0044342">
    <property type="term" value="P:type B pancreatic cell proliferation"/>
    <property type="evidence" value="ECO:0000250"/>
    <property type="project" value="UniProtKB"/>
</dbReference>
<dbReference type="InterPro" id="IPR035972">
    <property type="entry name" value="GLA-like_dom_SF"/>
</dbReference>
<dbReference type="InterPro" id="IPR000294">
    <property type="entry name" value="GLA_domain"/>
</dbReference>
<dbReference type="InterPro" id="IPR039176">
    <property type="entry name" value="Osteocalcin"/>
</dbReference>
<dbReference type="InterPro" id="IPR002384">
    <property type="entry name" value="Osteocalcin/MGP"/>
</dbReference>
<dbReference type="PANTHER" id="PTHR14235">
    <property type="entry name" value="OSTEOCALCIN"/>
    <property type="match status" value="1"/>
</dbReference>
<dbReference type="PANTHER" id="PTHR14235:SF0">
    <property type="entry name" value="OSTEOCALCIN"/>
    <property type="match status" value="1"/>
</dbReference>
<dbReference type="PRINTS" id="PR00002">
    <property type="entry name" value="GLABONE"/>
</dbReference>
<dbReference type="SMART" id="SM00069">
    <property type="entry name" value="GLA"/>
    <property type="match status" value="1"/>
</dbReference>
<dbReference type="SUPFAM" id="SSF57630">
    <property type="entry name" value="GLA-domain"/>
    <property type="match status" value="1"/>
</dbReference>
<dbReference type="PROSITE" id="PS00011">
    <property type="entry name" value="GLA_1"/>
    <property type="match status" value="1"/>
</dbReference>
<dbReference type="PROSITE" id="PS50998">
    <property type="entry name" value="GLA_2"/>
    <property type="match status" value="1"/>
</dbReference>
<reference key="1">
    <citation type="journal article" date="1984" name="Biochem. Int.">
        <title>The amino acid sequences of goat, pig and wallaby osteocalcins.</title>
        <authorList>
            <person name="Huq N.L."/>
            <person name="Teh L.-C."/>
            <person name="Christie D.L."/>
            <person name="Chapman G.E."/>
        </authorList>
    </citation>
    <scope>PROTEIN SEQUENCE</scope>
    <scope>FUNCTION</scope>
    <scope>HYDROXYLATION AT PRO-9</scope>
    <scope>GAMMA-CARBOXYGLUTAMATION AT GLU-17; GLU-21 AND GLU-24</scope>
    <source>
        <tissue>Bone</tissue>
    </source>
</reference>
<sequence length="49" mass="5523">YLDPGLGAPAPYPDPLEPKREVCELNPDCDELADHIGFQEAYRRFYGIA</sequence>
<gene>
    <name type="primary">BGLAP</name>
</gene>
<keyword id="KW-0091">Biomineralization</keyword>
<keyword id="KW-0106">Calcium</keyword>
<keyword id="KW-0903">Direct protein sequencing</keyword>
<keyword id="KW-1015">Disulfide bond</keyword>
<keyword id="KW-0301">Gamma-carboxyglutamic acid</keyword>
<keyword id="KW-0372">Hormone</keyword>
<keyword id="KW-0379">Hydroxylation</keyword>
<keyword id="KW-0479">Metal-binding</keyword>
<keyword id="KW-1185">Reference proteome</keyword>
<keyword id="KW-0964">Secreted</keyword>
<organism>
    <name type="scientific">Capra hircus</name>
    <name type="common">Goat</name>
    <dbReference type="NCBI Taxonomy" id="9925"/>
    <lineage>
        <taxon>Eukaryota</taxon>
        <taxon>Metazoa</taxon>
        <taxon>Chordata</taxon>
        <taxon>Craniata</taxon>
        <taxon>Vertebrata</taxon>
        <taxon>Euteleostomi</taxon>
        <taxon>Mammalia</taxon>
        <taxon>Eutheria</taxon>
        <taxon>Laurasiatheria</taxon>
        <taxon>Artiodactyla</taxon>
        <taxon>Ruminantia</taxon>
        <taxon>Pecora</taxon>
        <taxon>Bovidae</taxon>
        <taxon>Caprinae</taxon>
        <taxon>Capra</taxon>
    </lineage>
</organism>
<accession>P0C225</accession>
<feature type="chain" id="PRO_0000260271" description="Osteocalcin">
    <location>
        <begin position="1"/>
        <end position="49"/>
    </location>
</feature>
<feature type="domain" description="Gla" evidence="3">
    <location>
        <begin position="1"/>
        <end position="47"/>
    </location>
</feature>
<feature type="binding site" evidence="1">
    <location>
        <position position="17"/>
    </location>
    <ligand>
        <name>Ca(2+)</name>
        <dbReference type="ChEBI" id="CHEBI:29108"/>
        <label>1</label>
    </ligand>
</feature>
<feature type="binding site" evidence="1">
    <location>
        <position position="21"/>
    </location>
    <ligand>
        <name>Ca(2+)</name>
        <dbReference type="ChEBI" id="CHEBI:29108"/>
        <label>2</label>
    </ligand>
</feature>
<feature type="binding site" evidence="1">
    <location>
        <position position="24"/>
    </location>
    <ligand>
        <name>Ca(2+)</name>
        <dbReference type="ChEBI" id="CHEBI:29108"/>
        <label>2</label>
    </ligand>
</feature>
<feature type="binding site" evidence="1">
    <location>
        <position position="24"/>
    </location>
    <ligand>
        <name>Ca(2+)</name>
        <dbReference type="ChEBI" id="CHEBI:29108"/>
        <label>3</label>
    </ligand>
</feature>
<feature type="binding site" evidence="1">
    <location>
        <position position="30"/>
    </location>
    <ligand>
        <name>Ca(2+)</name>
        <dbReference type="ChEBI" id="CHEBI:29108"/>
        <label>3</label>
    </ligand>
</feature>
<feature type="modified residue" description="Hydroxyproline" evidence="4">
    <location>
        <position position="9"/>
    </location>
</feature>
<feature type="modified residue" description="4-carboxyglutamate" evidence="3 4">
    <location>
        <position position="17"/>
    </location>
</feature>
<feature type="modified residue" description="4-carboxyglutamate" evidence="3 4">
    <location>
        <position position="21"/>
    </location>
</feature>
<feature type="modified residue" description="4-carboxyglutamate" evidence="3 4">
    <location>
        <position position="24"/>
    </location>
</feature>
<feature type="disulfide bond" evidence="3">
    <location>
        <begin position="23"/>
        <end position="29"/>
    </location>
</feature>
<evidence type="ECO:0000250" key="1">
    <source>
        <dbReference type="UniProtKB" id="P02820"/>
    </source>
</evidence>
<evidence type="ECO:0000250" key="2">
    <source>
        <dbReference type="UniProtKB" id="P86546"/>
    </source>
</evidence>
<evidence type="ECO:0000255" key="3">
    <source>
        <dbReference type="PROSITE-ProRule" id="PRU00463"/>
    </source>
</evidence>
<evidence type="ECO:0000269" key="4">
    <source>
    </source>
</evidence>
<evidence type="ECO:0000305" key="5"/>